<accession>Q5HQL4</accession>
<sequence>MAIQFVINLLVSVIWLLVTNSYTLNNFVLGFILGLFLVYLLHRVLPGQFYLVRIYRIIMLIITFLTELIKANFGVLKIILKPRIENKPGFFVYETELERDWQLVLLSNLITLTPGTVVLGISDDRKKIYIHSIDFSTKEEEIQNIKSSLEKVVRKVGEK</sequence>
<name>MNHE1_STAEQ</name>
<keyword id="KW-0050">Antiport</keyword>
<keyword id="KW-1003">Cell membrane</keyword>
<keyword id="KW-0375">Hydrogen ion transport</keyword>
<keyword id="KW-0406">Ion transport</keyword>
<keyword id="KW-0472">Membrane</keyword>
<keyword id="KW-1185">Reference proteome</keyword>
<keyword id="KW-0915">Sodium</keyword>
<keyword id="KW-0739">Sodium transport</keyword>
<keyword id="KW-0812">Transmembrane</keyword>
<keyword id="KW-1133">Transmembrane helix</keyword>
<keyword id="KW-0813">Transport</keyword>
<evidence type="ECO:0000250" key="1"/>
<evidence type="ECO:0000255" key="2"/>
<evidence type="ECO:0000305" key="3"/>
<organism>
    <name type="scientific">Staphylococcus epidermidis (strain ATCC 35984 / DSM 28319 / BCRC 17069 / CCUG 31568 / BM 3577 / RP62A)</name>
    <dbReference type="NCBI Taxonomy" id="176279"/>
    <lineage>
        <taxon>Bacteria</taxon>
        <taxon>Bacillati</taxon>
        <taxon>Bacillota</taxon>
        <taxon>Bacilli</taxon>
        <taxon>Bacillales</taxon>
        <taxon>Staphylococcaceae</taxon>
        <taxon>Staphylococcus</taxon>
    </lineage>
</organism>
<reference key="1">
    <citation type="journal article" date="2005" name="J. Bacteriol.">
        <title>Insights on evolution of virulence and resistance from the complete genome analysis of an early methicillin-resistant Staphylococcus aureus strain and a biofilm-producing methicillin-resistant Staphylococcus epidermidis strain.</title>
        <authorList>
            <person name="Gill S.R."/>
            <person name="Fouts D.E."/>
            <person name="Archer G.L."/>
            <person name="Mongodin E.F."/>
            <person name="DeBoy R.T."/>
            <person name="Ravel J."/>
            <person name="Paulsen I.T."/>
            <person name="Kolonay J.F."/>
            <person name="Brinkac L.M."/>
            <person name="Beanan M.J."/>
            <person name="Dodson R.J."/>
            <person name="Daugherty S.C."/>
            <person name="Madupu R."/>
            <person name="Angiuoli S.V."/>
            <person name="Durkin A.S."/>
            <person name="Haft D.H."/>
            <person name="Vamathevan J.J."/>
            <person name="Khouri H."/>
            <person name="Utterback T.R."/>
            <person name="Lee C."/>
            <person name="Dimitrov G."/>
            <person name="Jiang L."/>
            <person name="Qin H."/>
            <person name="Weidman J."/>
            <person name="Tran K."/>
            <person name="Kang K.H."/>
            <person name="Hance I.R."/>
            <person name="Nelson K.E."/>
            <person name="Fraser C.M."/>
        </authorList>
    </citation>
    <scope>NUCLEOTIDE SEQUENCE [LARGE SCALE GENOMIC DNA]</scope>
    <source>
        <strain>ATCC 35984 / DSM 28319 / BCRC 17069 / CCUG 31568 / BM 3577 / RP62A</strain>
    </source>
</reference>
<comment type="function">
    <text evidence="1">Mnh complex is a Na(+)/H(+) antiporter involved in Na(+) excretion.</text>
</comment>
<comment type="subunit">
    <text evidence="1">May form a heterooligomeric complex that consists of seven subunits: mnhA1, mnhB1, mnhC1, mnhD1, mnhE1, mnhF1 and mnhG1.</text>
</comment>
<comment type="subcellular location">
    <subcellularLocation>
        <location evidence="3">Cell membrane</location>
        <topology evidence="3">Multi-pass membrane protein</topology>
    </subcellularLocation>
</comment>
<comment type="similarity">
    <text evidence="3">Belongs to the CPA3 antiporters (TC 2.A.63) subunit E family.</text>
</comment>
<proteinExistence type="inferred from homology"/>
<dbReference type="EMBL" id="CP000029">
    <property type="protein sequence ID" value="AAW53930.1"/>
    <property type="molecule type" value="Genomic_DNA"/>
</dbReference>
<dbReference type="RefSeq" id="WP_001831972.1">
    <property type="nucleotide sequence ID" value="NC_002976.3"/>
</dbReference>
<dbReference type="SMR" id="Q5HQL4"/>
<dbReference type="STRING" id="176279.SERP0534"/>
<dbReference type="KEGG" id="ser:SERP0534"/>
<dbReference type="eggNOG" id="COG1863">
    <property type="taxonomic scope" value="Bacteria"/>
</dbReference>
<dbReference type="HOGENOM" id="CLU_086615_3_2_9"/>
<dbReference type="Proteomes" id="UP000000531">
    <property type="component" value="Chromosome"/>
</dbReference>
<dbReference type="GO" id="GO:0005886">
    <property type="term" value="C:plasma membrane"/>
    <property type="evidence" value="ECO:0007669"/>
    <property type="project" value="UniProtKB-SubCell"/>
</dbReference>
<dbReference type="GO" id="GO:0015297">
    <property type="term" value="F:antiporter activity"/>
    <property type="evidence" value="ECO:0007669"/>
    <property type="project" value="UniProtKB-KW"/>
</dbReference>
<dbReference type="GO" id="GO:0008324">
    <property type="term" value="F:monoatomic cation transmembrane transporter activity"/>
    <property type="evidence" value="ECO:0007669"/>
    <property type="project" value="InterPro"/>
</dbReference>
<dbReference type="GO" id="GO:1902600">
    <property type="term" value="P:proton transmembrane transport"/>
    <property type="evidence" value="ECO:0007669"/>
    <property type="project" value="UniProtKB-KW"/>
</dbReference>
<dbReference type="GO" id="GO:0006814">
    <property type="term" value="P:sodium ion transport"/>
    <property type="evidence" value="ECO:0007669"/>
    <property type="project" value="UniProtKB-KW"/>
</dbReference>
<dbReference type="InterPro" id="IPR002758">
    <property type="entry name" value="Cation_antiport_E"/>
</dbReference>
<dbReference type="NCBIfam" id="NF009291">
    <property type="entry name" value="PRK12651.1-1"/>
    <property type="match status" value="1"/>
</dbReference>
<dbReference type="PANTHER" id="PTHR34584">
    <property type="entry name" value="NA(+)/H(+) ANTIPORTER SUBUNIT E1"/>
    <property type="match status" value="1"/>
</dbReference>
<dbReference type="PANTHER" id="PTHR34584:SF1">
    <property type="entry name" value="NA(+)_H(+) ANTIPORTER SUBUNIT E1"/>
    <property type="match status" value="1"/>
</dbReference>
<dbReference type="Pfam" id="PF01899">
    <property type="entry name" value="MNHE"/>
    <property type="match status" value="1"/>
</dbReference>
<dbReference type="PIRSF" id="PIRSF019239">
    <property type="entry name" value="MrpE"/>
    <property type="match status" value="1"/>
</dbReference>
<feature type="chain" id="PRO_0000372150" description="Na(+)/H(+) antiporter subunit E1">
    <location>
        <begin position="1"/>
        <end position="159"/>
    </location>
</feature>
<feature type="transmembrane region" description="Helical" evidence="2">
    <location>
        <begin position="1"/>
        <end position="21"/>
    </location>
</feature>
<feature type="transmembrane region" description="Helical" evidence="2">
    <location>
        <begin position="27"/>
        <end position="47"/>
    </location>
</feature>
<feature type="transmembrane region" description="Helical" evidence="2">
    <location>
        <begin position="60"/>
        <end position="80"/>
    </location>
</feature>
<feature type="transmembrane region" description="Helical" evidence="2">
    <location>
        <begin position="101"/>
        <end position="121"/>
    </location>
</feature>
<gene>
    <name type="primary">mnhE1</name>
    <name type="ordered locus">SERP0534</name>
</gene>
<protein>
    <recommendedName>
        <fullName>Na(+)/H(+) antiporter subunit E1</fullName>
    </recommendedName>
    <alternativeName>
        <fullName>Mnh complex subunit E1</fullName>
    </alternativeName>
</protein>